<name>Y191_SYNY3</name>
<proteinExistence type="inferred from homology"/>
<keyword id="KW-0223">Dioxygenase</keyword>
<keyword id="KW-0408">Iron</keyword>
<keyword id="KW-0479">Metal-binding</keyword>
<keyword id="KW-0560">Oxidoreductase</keyword>
<keyword id="KW-1185">Reference proteome</keyword>
<keyword id="KW-0847">Vitamin C</keyword>
<gene>
    <name type="ordered locus">sll0191</name>
</gene>
<comment type="cofactor">
    <cofactor evidence="2">
        <name>Fe(2+)</name>
        <dbReference type="ChEBI" id="CHEBI:29033"/>
    </cofactor>
    <text evidence="2">Binds 1 Fe(2+) ion per subunit.</text>
</comment>
<comment type="cofactor">
    <cofactor evidence="1">
        <name>L-ascorbate</name>
        <dbReference type="ChEBI" id="CHEBI:38290"/>
    </cofactor>
</comment>
<evidence type="ECO:0000250" key="1"/>
<evidence type="ECO:0000255" key="2">
    <source>
        <dbReference type="PROSITE-ProRule" id="PRU00805"/>
    </source>
</evidence>
<evidence type="ECO:0000305" key="3"/>
<protein>
    <recommendedName>
        <fullName>Uncharacterized PKHD-type hydroxylase sll0191</fullName>
        <ecNumber>1.14.11.-</ecNumber>
    </recommendedName>
    <alternativeName>
        <fullName>ORF60-3</fullName>
    </alternativeName>
</protein>
<organism>
    <name type="scientific">Synechocystis sp. (strain ATCC 27184 / PCC 6803 / Kazusa)</name>
    <dbReference type="NCBI Taxonomy" id="1111708"/>
    <lineage>
        <taxon>Bacteria</taxon>
        <taxon>Bacillati</taxon>
        <taxon>Cyanobacteriota</taxon>
        <taxon>Cyanophyceae</taxon>
        <taxon>Synechococcales</taxon>
        <taxon>Merismopediaceae</taxon>
        <taxon>Synechocystis</taxon>
    </lineage>
</organism>
<accession>P22039</accession>
<accession>Q55706</accession>
<reference key="1">
    <citation type="journal article" date="1995" name="DNA Res.">
        <title>Sequence analysis of the genome of the unicellular cyanobacterium Synechocystis sp. strain PCC6803. I. Sequence features in the 1 Mb region from map positions 64% to 92% of the genome.</title>
        <authorList>
            <person name="Kaneko T."/>
            <person name="Tanaka A."/>
            <person name="Sato S."/>
            <person name="Kotani H."/>
            <person name="Sazuka T."/>
            <person name="Miyajima N."/>
            <person name="Sugiura M."/>
            <person name="Tabata S."/>
        </authorList>
    </citation>
    <scope>NUCLEOTIDE SEQUENCE [LARGE SCALE GENOMIC DNA]</scope>
    <source>
        <strain>ATCC 27184 / PCC 6803 / N-1</strain>
    </source>
</reference>
<reference key="2">
    <citation type="journal article" date="1996" name="DNA Res.">
        <title>Sequence analysis of the genome of the unicellular cyanobacterium Synechocystis sp. strain PCC6803. II. Sequence determination of the entire genome and assignment of potential protein-coding regions.</title>
        <authorList>
            <person name="Kaneko T."/>
            <person name="Sato S."/>
            <person name="Kotani H."/>
            <person name="Tanaka A."/>
            <person name="Asamizu E."/>
            <person name="Nakamura Y."/>
            <person name="Miyajima N."/>
            <person name="Hirosawa M."/>
            <person name="Sugiura M."/>
            <person name="Sasamoto S."/>
            <person name="Kimura T."/>
            <person name="Hosouchi T."/>
            <person name="Matsuno A."/>
            <person name="Muraki A."/>
            <person name="Nakazaki N."/>
            <person name="Naruo K."/>
            <person name="Okumura S."/>
            <person name="Shimpo S."/>
            <person name="Takeuchi C."/>
            <person name="Wada T."/>
            <person name="Watanabe A."/>
            <person name="Yamada M."/>
            <person name="Yasuda M."/>
            <person name="Tabata S."/>
        </authorList>
    </citation>
    <scope>NUCLEOTIDE SEQUENCE [LARGE SCALE GENOMIC DNA]</scope>
    <source>
        <strain>ATCC 27184 / PCC 6803 / Kazusa</strain>
    </source>
</reference>
<reference key="3">
    <citation type="journal article" date="1991" name="J. Biol. Chem.">
        <title>Molecular cloning of the genes encoding two chaperone proteins of the cyanobacterium Synechocystis sp. PCC 6803.</title>
        <authorList>
            <person name="Chitnis P.R."/>
            <person name="Nelson N."/>
        </authorList>
    </citation>
    <scope>NUCLEOTIDE SEQUENCE [GENOMIC DNA]</scope>
</reference>
<sequence>MNRGAKVKTNGDNLALSTRAKKLLTKSIDTLETIIDNDQCSPQEKATIALKILEMAGIFTEFKHHSVDKLVAKAEEKIRRLQSQYPQINLSLSEPTLHQQSESIFLPGTYGEIKNFLSPEENQKIITEAIDKKEEYIKSNTTTKANQYRQSYVLFSQKIPALSALIRERIKQKLPELLGQLNFSPFEVAEIELQLTAHNDGCYYRIHNDAGSEKTASRQITYVYYFYQEPKAFSGGELRLYDTELKNNTITTHPKFQTITPINNSIIFFNSRCRHEVMSVVCPSREFAHSRFTVNGWIRKKMN</sequence>
<dbReference type="EC" id="1.14.11.-"/>
<dbReference type="EMBL" id="BA000022">
    <property type="protein sequence ID" value="BAA10239.1"/>
    <property type="molecule type" value="Genomic_DNA"/>
</dbReference>
<dbReference type="EMBL" id="M57517">
    <property type="protein sequence ID" value="AAA27285.1"/>
    <property type="molecule type" value="Genomic_DNA"/>
</dbReference>
<dbReference type="PIR" id="S76387">
    <property type="entry name" value="S76387"/>
</dbReference>
<dbReference type="SMR" id="P22039"/>
<dbReference type="IntAct" id="P22039">
    <property type="interactions" value="3"/>
</dbReference>
<dbReference type="STRING" id="1148.gene:10499738"/>
<dbReference type="PaxDb" id="1148-1001611"/>
<dbReference type="EnsemblBacteria" id="BAA10239">
    <property type="protein sequence ID" value="BAA10239"/>
    <property type="gene ID" value="BAA10239"/>
</dbReference>
<dbReference type="KEGG" id="syn:sll0191"/>
<dbReference type="eggNOG" id="COG3751">
    <property type="taxonomic scope" value="Bacteria"/>
</dbReference>
<dbReference type="InParanoid" id="P22039"/>
<dbReference type="PhylomeDB" id="P22039"/>
<dbReference type="Proteomes" id="UP000001425">
    <property type="component" value="Chromosome"/>
</dbReference>
<dbReference type="GO" id="GO:0051213">
    <property type="term" value="F:dioxygenase activity"/>
    <property type="evidence" value="ECO:0007669"/>
    <property type="project" value="UniProtKB-KW"/>
</dbReference>
<dbReference type="GO" id="GO:0005506">
    <property type="term" value="F:iron ion binding"/>
    <property type="evidence" value="ECO:0007669"/>
    <property type="project" value="InterPro"/>
</dbReference>
<dbReference type="GO" id="GO:0031418">
    <property type="term" value="F:L-ascorbic acid binding"/>
    <property type="evidence" value="ECO:0007669"/>
    <property type="project" value="UniProtKB-KW"/>
</dbReference>
<dbReference type="GO" id="GO:0016705">
    <property type="term" value="F:oxidoreductase activity, acting on paired donors, with incorporation or reduction of molecular oxygen"/>
    <property type="evidence" value="ECO:0007669"/>
    <property type="project" value="InterPro"/>
</dbReference>
<dbReference type="Gene3D" id="2.60.120.620">
    <property type="entry name" value="q2cbj1_9rhob like domain"/>
    <property type="match status" value="1"/>
</dbReference>
<dbReference type="InterPro" id="IPR051559">
    <property type="entry name" value="HIF_prolyl_hydroxylases"/>
</dbReference>
<dbReference type="InterPro" id="IPR005123">
    <property type="entry name" value="Oxoglu/Fe-dep_dioxygenase_dom"/>
</dbReference>
<dbReference type="InterPro" id="IPR006620">
    <property type="entry name" value="Pro_4_hyd_alph"/>
</dbReference>
<dbReference type="InterPro" id="IPR044862">
    <property type="entry name" value="Pro_4_hyd_alph_FE2OG_OXY"/>
</dbReference>
<dbReference type="PANTHER" id="PTHR12907">
    <property type="entry name" value="EGL NINE HOMOLOG-RELATED"/>
    <property type="match status" value="1"/>
</dbReference>
<dbReference type="PANTHER" id="PTHR12907:SF26">
    <property type="entry name" value="HIF PROLYL HYDROXYLASE, ISOFORM C"/>
    <property type="match status" value="1"/>
</dbReference>
<dbReference type="Pfam" id="PF13640">
    <property type="entry name" value="2OG-FeII_Oxy_3"/>
    <property type="match status" value="1"/>
</dbReference>
<dbReference type="SMART" id="SM00702">
    <property type="entry name" value="P4Hc"/>
    <property type="match status" value="1"/>
</dbReference>
<dbReference type="PROSITE" id="PS51471">
    <property type="entry name" value="FE2OG_OXY"/>
    <property type="match status" value="1"/>
</dbReference>
<feature type="chain" id="PRO_0000206689" description="Uncharacterized PKHD-type hydroxylase sll0191">
    <location>
        <begin position="1"/>
        <end position="303"/>
    </location>
</feature>
<feature type="domain" description="Fe2OG dioxygenase" evidence="2">
    <location>
        <begin position="173"/>
        <end position="300"/>
    </location>
</feature>
<feature type="sequence conflict" description="In Ref. 3; AAA27285." evidence="3" ref="3">
    <original>A</original>
    <variation>S</variation>
    <location>
        <position position="216"/>
    </location>
</feature>
<feature type="sequence conflict" description="In Ref. 3; AAA27285." evidence="3" ref="3">
    <original>LKNNTITTHPKFQTITPINNSIIFFNSRCRHEVMSVVCPSREFAHSRFTVNGWIRKKMN</original>
    <variation>A</variation>
    <location>
        <begin position="245"/>
        <end position="303"/>
    </location>
</feature>